<proteinExistence type="inferred from homology"/>
<feature type="chain" id="PRO_0000206551" description="Inner membrane-spanning protein YciB">
    <location>
        <begin position="1"/>
        <end position="181"/>
    </location>
</feature>
<feature type="transmembrane region" description="Helical" evidence="1">
    <location>
        <begin position="10"/>
        <end position="30"/>
    </location>
</feature>
<feature type="transmembrane region" description="Helical" evidence="1">
    <location>
        <begin position="50"/>
        <end position="70"/>
    </location>
</feature>
<feature type="transmembrane region" description="Helical" evidence="1">
    <location>
        <begin position="80"/>
        <end position="100"/>
    </location>
</feature>
<feature type="transmembrane region" description="Helical" evidence="1">
    <location>
        <begin position="120"/>
        <end position="140"/>
    </location>
</feature>
<feature type="transmembrane region" description="Helical" evidence="1">
    <location>
        <begin position="148"/>
        <end position="168"/>
    </location>
</feature>
<keyword id="KW-0997">Cell inner membrane</keyword>
<keyword id="KW-1003">Cell membrane</keyword>
<keyword id="KW-0472">Membrane</keyword>
<keyword id="KW-1185">Reference proteome</keyword>
<keyword id="KW-0812">Transmembrane</keyword>
<keyword id="KW-1133">Transmembrane helix</keyword>
<protein>
    <recommendedName>
        <fullName evidence="1">Inner membrane-spanning protein YciB</fullName>
    </recommendedName>
</protein>
<accession>Q9KRE2</accession>
<dbReference type="EMBL" id="AE003852">
    <property type="protein sequence ID" value="AAF94850.1"/>
    <property type="molecule type" value="Genomic_DNA"/>
</dbReference>
<dbReference type="PIR" id="A82167">
    <property type="entry name" value="A82167"/>
</dbReference>
<dbReference type="RefSeq" id="NP_231336.1">
    <property type="nucleotide sequence ID" value="NC_002505.1"/>
</dbReference>
<dbReference type="RefSeq" id="WP_000811598.1">
    <property type="nucleotide sequence ID" value="NZ_LT906614.1"/>
</dbReference>
<dbReference type="STRING" id="243277.VC_1700"/>
<dbReference type="DNASU" id="2613705"/>
<dbReference type="EnsemblBacteria" id="AAF94850">
    <property type="protein sequence ID" value="AAF94850"/>
    <property type="gene ID" value="VC_1700"/>
</dbReference>
<dbReference type="KEGG" id="vch:VC_1700"/>
<dbReference type="PATRIC" id="fig|243277.26.peg.1627"/>
<dbReference type="eggNOG" id="COG2917">
    <property type="taxonomic scope" value="Bacteria"/>
</dbReference>
<dbReference type="HOGENOM" id="CLU_089554_2_0_6"/>
<dbReference type="Proteomes" id="UP000000584">
    <property type="component" value="Chromosome 1"/>
</dbReference>
<dbReference type="GO" id="GO:0005886">
    <property type="term" value="C:plasma membrane"/>
    <property type="evidence" value="ECO:0000318"/>
    <property type="project" value="GO_Central"/>
</dbReference>
<dbReference type="HAMAP" id="MF_00189">
    <property type="entry name" value="YciB"/>
    <property type="match status" value="1"/>
</dbReference>
<dbReference type="InterPro" id="IPR006008">
    <property type="entry name" value="YciB"/>
</dbReference>
<dbReference type="NCBIfam" id="TIGR00997">
    <property type="entry name" value="ispZ"/>
    <property type="match status" value="1"/>
</dbReference>
<dbReference type="NCBIfam" id="NF001324">
    <property type="entry name" value="PRK00259.1-2"/>
    <property type="match status" value="1"/>
</dbReference>
<dbReference type="NCBIfam" id="NF001325">
    <property type="entry name" value="PRK00259.1-3"/>
    <property type="match status" value="1"/>
</dbReference>
<dbReference type="PANTHER" id="PTHR36917:SF1">
    <property type="entry name" value="INNER MEMBRANE-SPANNING PROTEIN YCIB"/>
    <property type="match status" value="1"/>
</dbReference>
<dbReference type="PANTHER" id="PTHR36917">
    <property type="entry name" value="INTRACELLULAR SEPTATION PROTEIN A-RELATED"/>
    <property type="match status" value="1"/>
</dbReference>
<dbReference type="Pfam" id="PF04279">
    <property type="entry name" value="IspA"/>
    <property type="match status" value="1"/>
</dbReference>
<reference key="1">
    <citation type="journal article" date="2000" name="Nature">
        <title>DNA sequence of both chromosomes of the cholera pathogen Vibrio cholerae.</title>
        <authorList>
            <person name="Heidelberg J.F."/>
            <person name="Eisen J.A."/>
            <person name="Nelson W.C."/>
            <person name="Clayton R.A."/>
            <person name="Gwinn M.L."/>
            <person name="Dodson R.J."/>
            <person name="Haft D.H."/>
            <person name="Hickey E.K."/>
            <person name="Peterson J.D."/>
            <person name="Umayam L.A."/>
            <person name="Gill S.R."/>
            <person name="Nelson K.E."/>
            <person name="Read T.D."/>
            <person name="Tettelin H."/>
            <person name="Richardson D.L."/>
            <person name="Ermolaeva M.D."/>
            <person name="Vamathevan J.J."/>
            <person name="Bass S."/>
            <person name="Qin H."/>
            <person name="Dragoi I."/>
            <person name="Sellers P."/>
            <person name="McDonald L.A."/>
            <person name="Utterback T.R."/>
            <person name="Fleischmann R.D."/>
            <person name="Nierman W.C."/>
            <person name="White O."/>
            <person name="Salzberg S.L."/>
            <person name="Smith H.O."/>
            <person name="Colwell R.R."/>
            <person name="Mekalanos J.J."/>
            <person name="Venter J.C."/>
            <person name="Fraser C.M."/>
        </authorList>
    </citation>
    <scope>NUCLEOTIDE SEQUENCE [LARGE SCALE GENOMIC DNA]</scope>
    <source>
        <strain>ATCC 39315 / El Tor Inaba N16961</strain>
    </source>
</reference>
<gene>
    <name evidence="1" type="primary">yciB</name>
    <name type="ordered locus">VC_1700</name>
</gene>
<organism>
    <name type="scientific">Vibrio cholerae serotype O1 (strain ATCC 39315 / El Tor Inaba N16961)</name>
    <dbReference type="NCBI Taxonomy" id="243277"/>
    <lineage>
        <taxon>Bacteria</taxon>
        <taxon>Pseudomonadati</taxon>
        <taxon>Pseudomonadota</taxon>
        <taxon>Gammaproteobacteria</taxon>
        <taxon>Vibrionales</taxon>
        <taxon>Vibrionaceae</taxon>
        <taxon>Vibrio</taxon>
    </lineage>
</organism>
<evidence type="ECO:0000255" key="1">
    <source>
        <dbReference type="HAMAP-Rule" id="MF_00189"/>
    </source>
</evidence>
<sequence>MKQLLDFIPLIIFFALYKFYDIYVATGALIAATTVQVIVTYAMYKKVEKMQLITFVMVALFGGMTLALHDDNFIKWKVTIVYVVFALGLTISQIMGKPAIKGMLGKELTLPDAVWSTINWAWVMFFSGCAALNLYVAYHLPLDVWVNFKVFGLLAATLVFTLLTGGYIYKHLPHEPKQKNQ</sequence>
<name>YCIB_VIBCH</name>
<comment type="function">
    <text evidence="1">Plays a role in cell envelope biogenesis, maintenance of cell envelope integrity and membrane homeostasis.</text>
</comment>
<comment type="subcellular location">
    <subcellularLocation>
        <location evidence="1">Cell inner membrane</location>
        <topology evidence="1">Multi-pass membrane protein</topology>
    </subcellularLocation>
</comment>
<comment type="similarity">
    <text evidence="1">Belongs to the YciB family.</text>
</comment>